<comment type="catalytic activity">
    <reaction evidence="1">
        <text>urea + 2 H2O + H(+) = hydrogencarbonate + 2 NH4(+)</text>
        <dbReference type="Rhea" id="RHEA:20557"/>
        <dbReference type="ChEBI" id="CHEBI:15377"/>
        <dbReference type="ChEBI" id="CHEBI:15378"/>
        <dbReference type="ChEBI" id="CHEBI:16199"/>
        <dbReference type="ChEBI" id="CHEBI:17544"/>
        <dbReference type="ChEBI" id="CHEBI:28938"/>
        <dbReference type="EC" id="3.5.1.5"/>
    </reaction>
</comment>
<comment type="pathway">
    <text evidence="1">Nitrogen metabolism; urea degradation; CO(2) and NH(3) from urea (urease route): step 1/1.</text>
</comment>
<comment type="subunit">
    <text evidence="1">Heterotrimer of UreA (gamma), UreB (beta) and UreC (alpha) subunits. Three heterotrimers associate to form the active enzyme.</text>
</comment>
<comment type="subcellular location">
    <subcellularLocation>
        <location evidence="1">Cytoplasm</location>
    </subcellularLocation>
</comment>
<comment type="similarity">
    <text evidence="1">Belongs to the urease gamma subunit family.</text>
</comment>
<sequence length="100" mass="11093">MHLQPKDLEKLLVVVAADLARRRQQRGLKLNHPEAIAIITYELMEGARDGRSVADLMSWGSTILTVDDVQEGVADMISMVQVEATFPDGTKLVTVHDPIR</sequence>
<reference key="1">
    <citation type="journal article" date="2010" name="J. Bacteriol.">
        <title>Genome sequence of the Fleming strain of Micrococcus luteus, a simple free-living actinobacterium.</title>
        <authorList>
            <person name="Young M."/>
            <person name="Artsatbanov V."/>
            <person name="Beller H.R."/>
            <person name="Chandra G."/>
            <person name="Chater K.F."/>
            <person name="Dover L.G."/>
            <person name="Goh E.B."/>
            <person name="Kahan T."/>
            <person name="Kaprelyants A.S."/>
            <person name="Kyrpides N."/>
            <person name="Lapidus A."/>
            <person name="Lowry S.R."/>
            <person name="Lykidis A."/>
            <person name="Mahillon J."/>
            <person name="Markowitz V."/>
            <person name="Mavromatis K."/>
            <person name="Mukamolova G.V."/>
            <person name="Oren A."/>
            <person name="Rokem J.S."/>
            <person name="Smith M.C."/>
            <person name="Young D.I."/>
            <person name="Greenblatt C.L."/>
        </authorList>
    </citation>
    <scope>NUCLEOTIDE SEQUENCE [LARGE SCALE GENOMIC DNA]</scope>
    <source>
        <strain>ATCC 4698 / DSM 20030 / JCM 1464 / CCM 169 / CCUG 5858 / IAM 1056 / NBRC 3333 / NCIMB 9278 / NCTC 2665 / VKM Ac-2230</strain>
    </source>
</reference>
<feature type="chain" id="PRO_1000212802" description="Urease subunit gamma">
    <location>
        <begin position="1"/>
        <end position="100"/>
    </location>
</feature>
<protein>
    <recommendedName>
        <fullName evidence="1">Urease subunit gamma</fullName>
        <ecNumber evidence="1">3.5.1.5</ecNumber>
    </recommendedName>
    <alternativeName>
        <fullName evidence="1">Urea amidohydrolase subunit gamma</fullName>
    </alternativeName>
</protein>
<keyword id="KW-0963">Cytoplasm</keyword>
<keyword id="KW-0378">Hydrolase</keyword>
<keyword id="KW-1185">Reference proteome</keyword>
<proteinExistence type="inferred from homology"/>
<accession>C5C8U1</accession>
<gene>
    <name evidence="1" type="primary">ureA</name>
    <name type="ordered locus">Mlut_03420</name>
</gene>
<evidence type="ECO:0000255" key="1">
    <source>
        <dbReference type="HAMAP-Rule" id="MF_00739"/>
    </source>
</evidence>
<name>URE3_MICLC</name>
<organism>
    <name type="scientific">Micrococcus luteus (strain ATCC 4698 / DSM 20030 / JCM 1464 / CCM 169 / CCUG 5858 / IAM 1056 / NBRC 3333 / NCIMB 9278 / NCTC 2665 / VKM Ac-2230)</name>
    <name type="common">Micrococcus lysodeikticus</name>
    <dbReference type="NCBI Taxonomy" id="465515"/>
    <lineage>
        <taxon>Bacteria</taxon>
        <taxon>Bacillati</taxon>
        <taxon>Actinomycetota</taxon>
        <taxon>Actinomycetes</taxon>
        <taxon>Micrococcales</taxon>
        <taxon>Micrococcaceae</taxon>
        <taxon>Micrococcus</taxon>
    </lineage>
</organism>
<dbReference type="EC" id="3.5.1.5" evidence="1"/>
<dbReference type="EMBL" id="CP001628">
    <property type="protein sequence ID" value="ACS29893.1"/>
    <property type="molecule type" value="Genomic_DNA"/>
</dbReference>
<dbReference type="RefSeq" id="WP_002854142.1">
    <property type="nucleotide sequence ID" value="NZ_WBMF01000038.1"/>
</dbReference>
<dbReference type="SMR" id="C5C8U1"/>
<dbReference type="STRING" id="465515.Mlut_03420"/>
<dbReference type="EnsemblBacteria" id="ACS29893">
    <property type="protein sequence ID" value="ACS29893"/>
    <property type="gene ID" value="Mlut_03420"/>
</dbReference>
<dbReference type="KEGG" id="mlu:Mlut_03420"/>
<dbReference type="eggNOG" id="COG0831">
    <property type="taxonomic scope" value="Bacteria"/>
</dbReference>
<dbReference type="HOGENOM" id="CLU_145825_1_0_11"/>
<dbReference type="UniPathway" id="UPA00258">
    <property type="reaction ID" value="UER00370"/>
</dbReference>
<dbReference type="Proteomes" id="UP000000738">
    <property type="component" value="Chromosome"/>
</dbReference>
<dbReference type="GO" id="GO:0005737">
    <property type="term" value="C:cytoplasm"/>
    <property type="evidence" value="ECO:0007669"/>
    <property type="project" value="UniProtKB-SubCell"/>
</dbReference>
<dbReference type="GO" id="GO:0016151">
    <property type="term" value="F:nickel cation binding"/>
    <property type="evidence" value="ECO:0007669"/>
    <property type="project" value="InterPro"/>
</dbReference>
<dbReference type="GO" id="GO:0009039">
    <property type="term" value="F:urease activity"/>
    <property type="evidence" value="ECO:0007669"/>
    <property type="project" value="UniProtKB-UniRule"/>
</dbReference>
<dbReference type="GO" id="GO:0043419">
    <property type="term" value="P:urea catabolic process"/>
    <property type="evidence" value="ECO:0007669"/>
    <property type="project" value="UniProtKB-UniRule"/>
</dbReference>
<dbReference type="CDD" id="cd00390">
    <property type="entry name" value="Urease_gamma"/>
    <property type="match status" value="1"/>
</dbReference>
<dbReference type="Gene3D" id="3.30.280.10">
    <property type="entry name" value="Urease, gamma-like subunit"/>
    <property type="match status" value="1"/>
</dbReference>
<dbReference type="HAMAP" id="MF_00739">
    <property type="entry name" value="Urease_gamma"/>
    <property type="match status" value="1"/>
</dbReference>
<dbReference type="InterPro" id="IPR012010">
    <property type="entry name" value="Urease_gamma"/>
</dbReference>
<dbReference type="InterPro" id="IPR002026">
    <property type="entry name" value="Urease_gamma/gamma-beta_su"/>
</dbReference>
<dbReference type="InterPro" id="IPR036463">
    <property type="entry name" value="Urease_gamma_sf"/>
</dbReference>
<dbReference type="InterPro" id="IPR050069">
    <property type="entry name" value="Urease_subunit"/>
</dbReference>
<dbReference type="NCBIfam" id="NF009712">
    <property type="entry name" value="PRK13241.1"/>
    <property type="match status" value="1"/>
</dbReference>
<dbReference type="NCBIfam" id="TIGR00193">
    <property type="entry name" value="urease_gam"/>
    <property type="match status" value="1"/>
</dbReference>
<dbReference type="PANTHER" id="PTHR33569">
    <property type="entry name" value="UREASE"/>
    <property type="match status" value="1"/>
</dbReference>
<dbReference type="PANTHER" id="PTHR33569:SF1">
    <property type="entry name" value="UREASE"/>
    <property type="match status" value="1"/>
</dbReference>
<dbReference type="Pfam" id="PF00547">
    <property type="entry name" value="Urease_gamma"/>
    <property type="match status" value="1"/>
</dbReference>
<dbReference type="PIRSF" id="PIRSF001223">
    <property type="entry name" value="Urease_gamma"/>
    <property type="match status" value="1"/>
</dbReference>
<dbReference type="SUPFAM" id="SSF54111">
    <property type="entry name" value="Urease, gamma-subunit"/>
    <property type="match status" value="1"/>
</dbReference>